<protein>
    <recommendedName>
        <fullName evidence="1">Cobalt-precorrin-5B C(1)-methyltransferase</fullName>
        <ecNumber evidence="1">2.1.1.195</ecNumber>
    </recommendedName>
    <alternativeName>
        <fullName evidence="1">Cobalt-precorrin-6A synthase</fullName>
    </alternativeName>
</protein>
<feature type="chain" id="PRO_0000257773" description="Cobalt-precorrin-5B C(1)-methyltransferase">
    <location>
        <begin position="1"/>
        <end position="365"/>
    </location>
</feature>
<comment type="function">
    <text evidence="1">Catalyzes the methylation of C-1 in cobalt-precorrin-5B to form cobalt-precorrin-6A.</text>
</comment>
<comment type="catalytic activity">
    <reaction evidence="1">
        <text>Co-precorrin-5B + S-adenosyl-L-methionine = Co-precorrin-6A + S-adenosyl-L-homocysteine</text>
        <dbReference type="Rhea" id="RHEA:26285"/>
        <dbReference type="ChEBI" id="CHEBI:57856"/>
        <dbReference type="ChEBI" id="CHEBI:59789"/>
        <dbReference type="ChEBI" id="CHEBI:60063"/>
        <dbReference type="ChEBI" id="CHEBI:60064"/>
        <dbReference type="EC" id="2.1.1.195"/>
    </reaction>
</comment>
<comment type="pathway">
    <text evidence="1">Cofactor biosynthesis; adenosylcobalamin biosynthesis; cob(II)yrinate a,c-diamide from sirohydrochlorin (anaerobic route): step 6/10.</text>
</comment>
<comment type="similarity">
    <text evidence="1">Belongs to the CbiD family.</text>
</comment>
<organism>
    <name type="scientific">Pseudomonas fluorescens (strain Pf0-1)</name>
    <dbReference type="NCBI Taxonomy" id="205922"/>
    <lineage>
        <taxon>Bacteria</taxon>
        <taxon>Pseudomonadati</taxon>
        <taxon>Pseudomonadota</taxon>
        <taxon>Gammaproteobacteria</taxon>
        <taxon>Pseudomonadales</taxon>
        <taxon>Pseudomonadaceae</taxon>
        <taxon>Pseudomonas</taxon>
    </lineage>
</organism>
<name>CBID_PSEPF</name>
<evidence type="ECO:0000255" key="1">
    <source>
        <dbReference type="HAMAP-Rule" id="MF_00787"/>
    </source>
</evidence>
<accession>Q3KIR0</accession>
<gene>
    <name evidence="1" type="primary">cbiD</name>
    <name type="ordered locus">Pfl01_0602</name>
</gene>
<sequence length="365" mass="38032">MRDETAEQPAPLRSGLTTGSCATATSLAAARLLLGGVVADAVQIVLPKGKQVQMRLEFCRLTKDGAEAGTIKDAGDDPDVTHGALLYSRVQLMAEPGIRFIAGKGVGTVTRPGLVLPVGEPAINPVPRKMISDHLTLLAEETGYRGGFEVTVNVEGGEALALKTMNPRLGILGGLSILGTSGIVRPFSCAAYIASIHQGIDVAKTNGFLHIAACTGNASEDTMRRVYNLPEIALIEMGDFVGAVLKHLRKVPVDKLSLCGGFGKISKLAAGHMDLHSRHSSIDLPQLAEWAAAIGADDTLQQAIRGANTSQQALAIASAAGVALGDEVCRHALEFARSVVPAQVQVEVFAIDRQGGIVGHAGAFV</sequence>
<proteinExistence type="inferred from homology"/>
<reference key="1">
    <citation type="journal article" date="2009" name="Genome Biol.">
        <title>Genomic and genetic analyses of diversity and plant interactions of Pseudomonas fluorescens.</title>
        <authorList>
            <person name="Silby M.W."/>
            <person name="Cerdeno-Tarraga A.M."/>
            <person name="Vernikos G.S."/>
            <person name="Giddens S.R."/>
            <person name="Jackson R.W."/>
            <person name="Preston G.M."/>
            <person name="Zhang X.-X."/>
            <person name="Moon C.D."/>
            <person name="Gehrig S.M."/>
            <person name="Godfrey S.A.C."/>
            <person name="Knight C.G."/>
            <person name="Malone J.G."/>
            <person name="Robinson Z."/>
            <person name="Spiers A.J."/>
            <person name="Harris S."/>
            <person name="Challis G.L."/>
            <person name="Yaxley A.M."/>
            <person name="Harris D."/>
            <person name="Seeger K."/>
            <person name="Murphy L."/>
            <person name="Rutter S."/>
            <person name="Squares R."/>
            <person name="Quail M.A."/>
            <person name="Saunders E."/>
            <person name="Mavromatis K."/>
            <person name="Brettin T.S."/>
            <person name="Bentley S.D."/>
            <person name="Hothersall J."/>
            <person name="Stephens E."/>
            <person name="Thomas C.M."/>
            <person name="Parkhill J."/>
            <person name="Levy S.B."/>
            <person name="Rainey P.B."/>
            <person name="Thomson N.R."/>
        </authorList>
    </citation>
    <scope>NUCLEOTIDE SEQUENCE [LARGE SCALE GENOMIC DNA]</scope>
    <source>
        <strain>Pf0-1</strain>
    </source>
</reference>
<keyword id="KW-0169">Cobalamin biosynthesis</keyword>
<keyword id="KW-0489">Methyltransferase</keyword>
<keyword id="KW-0949">S-adenosyl-L-methionine</keyword>
<keyword id="KW-0808">Transferase</keyword>
<dbReference type="EC" id="2.1.1.195" evidence="1"/>
<dbReference type="EMBL" id="CP000094">
    <property type="protein sequence ID" value="ABA72346.1"/>
    <property type="molecule type" value="Genomic_DNA"/>
</dbReference>
<dbReference type="RefSeq" id="WP_011332250.1">
    <property type="nucleotide sequence ID" value="NC_007492.2"/>
</dbReference>
<dbReference type="SMR" id="Q3KIR0"/>
<dbReference type="KEGG" id="pfo:Pfl01_0602"/>
<dbReference type="eggNOG" id="COG1903">
    <property type="taxonomic scope" value="Bacteria"/>
</dbReference>
<dbReference type="HOGENOM" id="CLU_041273_0_0_6"/>
<dbReference type="UniPathway" id="UPA00148">
    <property type="reaction ID" value="UER00227"/>
</dbReference>
<dbReference type="Proteomes" id="UP000002704">
    <property type="component" value="Chromosome"/>
</dbReference>
<dbReference type="GO" id="GO:0043780">
    <property type="term" value="F:cobalt-precorrin-5B C1-methyltransferase activity"/>
    <property type="evidence" value="ECO:0007669"/>
    <property type="project" value="RHEA"/>
</dbReference>
<dbReference type="GO" id="GO:0019251">
    <property type="term" value="P:anaerobic cobalamin biosynthetic process"/>
    <property type="evidence" value="ECO:0007669"/>
    <property type="project" value="UniProtKB-UniRule"/>
</dbReference>
<dbReference type="GO" id="GO:0032259">
    <property type="term" value="P:methylation"/>
    <property type="evidence" value="ECO:0007669"/>
    <property type="project" value="UniProtKB-KW"/>
</dbReference>
<dbReference type="Gene3D" id="3.30.2110.10">
    <property type="entry name" value="CbiD-like"/>
    <property type="match status" value="1"/>
</dbReference>
<dbReference type="HAMAP" id="MF_00787">
    <property type="entry name" value="CbiD"/>
    <property type="match status" value="1"/>
</dbReference>
<dbReference type="InterPro" id="IPR002748">
    <property type="entry name" value="CbiD"/>
</dbReference>
<dbReference type="InterPro" id="IPR036074">
    <property type="entry name" value="CbiD_sf"/>
</dbReference>
<dbReference type="NCBIfam" id="TIGR00312">
    <property type="entry name" value="cbiD"/>
    <property type="match status" value="1"/>
</dbReference>
<dbReference type="NCBIfam" id="NF000849">
    <property type="entry name" value="PRK00075.1-1"/>
    <property type="match status" value="1"/>
</dbReference>
<dbReference type="PANTHER" id="PTHR35863">
    <property type="entry name" value="COBALT-PRECORRIN-5B C(1)-METHYLTRANSFERASE"/>
    <property type="match status" value="1"/>
</dbReference>
<dbReference type="PANTHER" id="PTHR35863:SF1">
    <property type="entry name" value="COBALT-PRECORRIN-5B C(1)-METHYLTRANSFERASE"/>
    <property type="match status" value="1"/>
</dbReference>
<dbReference type="Pfam" id="PF01888">
    <property type="entry name" value="CbiD"/>
    <property type="match status" value="1"/>
</dbReference>
<dbReference type="PIRSF" id="PIRSF026782">
    <property type="entry name" value="CbiD"/>
    <property type="match status" value="1"/>
</dbReference>
<dbReference type="SUPFAM" id="SSF111342">
    <property type="entry name" value="CbiD-like"/>
    <property type="match status" value="1"/>
</dbReference>